<dbReference type="EC" id="1.14.14.1"/>
<dbReference type="EMBL" id="M29852">
    <property type="protein sequence ID" value="AAA31214.1"/>
    <property type="molecule type" value="mRNA"/>
</dbReference>
<dbReference type="EMBL" id="AF176914">
    <property type="protein sequence ID" value="AAD52658.4"/>
    <property type="molecule type" value="mRNA"/>
</dbReference>
<dbReference type="EMBL" id="AF332576">
    <property type="protein sequence ID" value="AAG52885.1"/>
    <property type="molecule type" value="mRNA"/>
</dbReference>
<dbReference type="PIR" id="A40164">
    <property type="entry name" value="A40164"/>
</dbReference>
<dbReference type="RefSeq" id="NP_001075572.1">
    <property type="nucleotide sequence ID" value="NM_001082103.1"/>
</dbReference>
<dbReference type="PDB" id="5T6Q">
    <property type="method" value="X-ray"/>
    <property type="resolution" value="2.70 A"/>
    <property type="chains" value="A=20-506"/>
</dbReference>
<dbReference type="PDBsum" id="5T6Q"/>
<dbReference type="SMR" id="P15128"/>
<dbReference type="FunCoup" id="P15128">
    <property type="interactions" value="301"/>
</dbReference>
<dbReference type="STRING" id="9986.ENSOCUP00000036428"/>
<dbReference type="PaxDb" id="9986-ENSOCUP00000009637"/>
<dbReference type="GeneID" id="100008805"/>
<dbReference type="KEGG" id="ocu:100008805"/>
<dbReference type="CTD" id="1580"/>
<dbReference type="eggNOG" id="KOG0157">
    <property type="taxonomic scope" value="Eukaryota"/>
</dbReference>
<dbReference type="InParanoid" id="P15128"/>
<dbReference type="OrthoDB" id="1470350at2759"/>
<dbReference type="Proteomes" id="UP000001811">
    <property type="component" value="Unplaced"/>
</dbReference>
<dbReference type="GO" id="GO:0005789">
    <property type="term" value="C:endoplasmic reticulum membrane"/>
    <property type="evidence" value="ECO:0007669"/>
    <property type="project" value="UniProtKB-SubCell"/>
</dbReference>
<dbReference type="GO" id="GO:0020037">
    <property type="term" value="F:heme binding"/>
    <property type="evidence" value="ECO:0007669"/>
    <property type="project" value="InterPro"/>
</dbReference>
<dbReference type="GO" id="GO:0005506">
    <property type="term" value="F:iron ion binding"/>
    <property type="evidence" value="ECO:0007669"/>
    <property type="project" value="InterPro"/>
</dbReference>
<dbReference type="GO" id="GO:0016712">
    <property type="term" value="F:oxidoreductase activity, acting on paired donors, with incorporation or reduction of molecular oxygen, reduced flavin or flavoprotein as one donor, and incorporation of one atom of oxygen"/>
    <property type="evidence" value="ECO:0007669"/>
    <property type="project" value="UniProtKB-EC"/>
</dbReference>
<dbReference type="CDD" id="cd20678">
    <property type="entry name" value="CYP4B-like"/>
    <property type="match status" value="1"/>
</dbReference>
<dbReference type="FunFam" id="1.10.630.10:FF:000005">
    <property type="entry name" value="cytochrome P450 4F22 isoform X2"/>
    <property type="match status" value="1"/>
</dbReference>
<dbReference type="Gene3D" id="1.10.630.10">
    <property type="entry name" value="Cytochrome P450"/>
    <property type="match status" value="1"/>
</dbReference>
<dbReference type="InterPro" id="IPR001128">
    <property type="entry name" value="Cyt_P450"/>
</dbReference>
<dbReference type="InterPro" id="IPR017972">
    <property type="entry name" value="Cyt_P450_CS"/>
</dbReference>
<dbReference type="InterPro" id="IPR002401">
    <property type="entry name" value="Cyt_P450_E_grp-I"/>
</dbReference>
<dbReference type="InterPro" id="IPR036396">
    <property type="entry name" value="Cyt_P450_sf"/>
</dbReference>
<dbReference type="InterPro" id="IPR050196">
    <property type="entry name" value="Cytochrome_P450_Monoox"/>
</dbReference>
<dbReference type="PANTHER" id="PTHR24291:SF149">
    <property type="entry name" value="CYTOCHROME P450 4B1"/>
    <property type="match status" value="1"/>
</dbReference>
<dbReference type="PANTHER" id="PTHR24291">
    <property type="entry name" value="CYTOCHROME P450 FAMILY 4"/>
    <property type="match status" value="1"/>
</dbReference>
<dbReference type="Pfam" id="PF00067">
    <property type="entry name" value="p450"/>
    <property type="match status" value="1"/>
</dbReference>
<dbReference type="PRINTS" id="PR00463">
    <property type="entry name" value="EP450I"/>
</dbReference>
<dbReference type="PRINTS" id="PR00385">
    <property type="entry name" value="P450"/>
</dbReference>
<dbReference type="SUPFAM" id="SSF48264">
    <property type="entry name" value="Cytochrome P450"/>
    <property type="match status" value="1"/>
</dbReference>
<dbReference type="PROSITE" id="PS00086">
    <property type="entry name" value="CYTOCHROME_P450"/>
    <property type="match status" value="1"/>
</dbReference>
<reference key="1">
    <citation type="journal article" date="1989" name="Mol. Pharmacol.">
        <title>Primary structures of cytochrome P-450 isozyme 5 from rabbit and rat and regulation of species-dependent expression and induction in lung and liver: identification of cytochrome P-450 gene subfamily IVB.</title>
        <authorList>
            <person name="Gasser R."/>
            <person name="Philpot R.M."/>
        </authorList>
    </citation>
    <scope>NUCLEOTIDE SEQUENCE [MRNA]</scope>
</reference>
<reference key="2">
    <citation type="submission" date="2000-12" db="EMBL/GenBank/DDBJ databases">
        <title>Rabbit corneal hypoxia-inducible CYP4B1-like isoform, 3'-coding and noncoding regions.</title>
        <authorList>
            <person name="Mastyugin V."/>
            <person name="Schwartzman M.L."/>
        </authorList>
    </citation>
    <scope>NUCLEOTIDE SEQUENCE [MRNA]</scope>
    <source>
        <tissue>Corneal epithelium</tissue>
    </source>
</reference>
<reference key="3">
    <citation type="journal article" date="1987" name="Drug Metab. Dispos.">
        <title>Cytochrome P-450 isozymes 2 and 5 in rabbit lung and liver. Comparisons of structure and inducibility.</title>
        <authorList>
            <person name="Parandoosh Z."/>
            <person name="Fujita V.S."/>
            <person name="Coon M.J."/>
            <person name="Philpot R.M."/>
        </authorList>
    </citation>
    <scope>PROTEIN SEQUENCE OF 1-21</scope>
</reference>
<proteinExistence type="evidence at protein level"/>
<sequence length="506" mass="58604">MLGFLSRLGLWASGLILILGFLKLLRLLLRRQRLARAMDSFPGPPTHWLFGHALEIQKTGSLDKVVTWTQQFPYAHPLWVGQFIGFLNIYEPDYAKAVYSRGDPKAPDVYDFFLQWIGKGLLVLDGPKWFQHRKLLTPGFHYDVLKPYVAIFADSTRIMLEKWEKKACEGKSFDIFSDVGHMALDTLMKCTFGKGDSGLNHRDSSYYVAVSELTLLMQQRIDSFQYHNDFIYWLTPHGRRFLRACRAAHDHTDRVIRQRKAALQDEKEREKIQNRRHLDFLDILLDVRGESGVQLSDTDLRAEVDTFMFEGHDTTTSGISWFLYCMALYPEHQQRCREEVREILGDQDSFQWEDLAKMTYLTMCMKECFRLYPPVPQVYRQLSKPVSFVDGRSLPAGSLISLHIYALHRNSDVWPDPEVFDPLRFSPENSSGRHPYAFIPFSAGPRNCIGQQFAMNEMKVVTALCLLRFEFSVDPLRLPIKLPQLVLRSKNGIHLYLKPLGPKAEK</sequence>
<gene>
    <name type="primary">CYP4B1</name>
</gene>
<comment type="function">
    <text>Cytochromes P450 are a group of heme-thiolate monooxygenases. In liver microsomes, this enzyme is involved in an NADPH-dependent electron transport pathway. It oxidizes a variety of structurally unrelated compounds, including steroids, fatty acids, and xenobiotics.</text>
</comment>
<comment type="catalytic activity">
    <reaction>
        <text>an organic molecule + reduced [NADPH--hemoprotein reductase] + O2 = an alcohol + oxidized [NADPH--hemoprotein reductase] + H2O + H(+)</text>
        <dbReference type="Rhea" id="RHEA:17149"/>
        <dbReference type="Rhea" id="RHEA-COMP:11964"/>
        <dbReference type="Rhea" id="RHEA-COMP:11965"/>
        <dbReference type="ChEBI" id="CHEBI:15377"/>
        <dbReference type="ChEBI" id="CHEBI:15378"/>
        <dbReference type="ChEBI" id="CHEBI:15379"/>
        <dbReference type="ChEBI" id="CHEBI:30879"/>
        <dbReference type="ChEBI" id="CHEBI:57618"/>
        <dbReference type="ChEBI" id="CHEBI:58210"/>
        <dbReference type="ChEBI" id="CHEBI:142491"/>
        <dbReference type="EC" id="1.14.14.1"/>
    </reaction>
</comment>
<comment type="cofactor">
    <cofactor evidence="2">
        <name>heme</name>
        <dbReference type="ChEBI" id="CHEBI:30413"/>
    </cofactor>
</comment>
<comment type="subcellular location">
    <subcellularLocation>
        <location>Endoplasmic reticulum membrane</location>
        <topology>Peripheral membrane protein</topology>
    </subcellularLocation>
    <subcellularLocation>
        <location>Microsome membrane</location>
        <topology>Peripheral membrane protein</topology>
    </subcellularLocation>
</comment>
<comment type="induction">
    <text>P450 can be induced to high levels in liver and other tissues by various foreign compounds, including drugs, pesticides, and carcinogens.</text>
</comment>
<comment type="similarity">
    <text evidence="3">Belongs to the cytochrome P450 family.</text>
</comment>
<organism>
    <name type="scientific">Oryctolagus cuniculus</name>
    <name type="common">Rabbit</name>
    <dbReference type="NCBI Taxonomy" id="9986"/>
    <lineage>
        <taxon>Eukaryota</taxon>
        <taxon>Metazoa</taxon>
        <taxon>Chordata</taxon>
        <taxon>Craniata</taxon>
        <taxon>Vertebrata</taxon>
        <taxon>Euteleostomi</taxon>
        <taxon>Mammalia</taxon>
        <taxon>Eutheria</taxon>
        <taxon>Euarchontoglires</taxon>
        <taxon>Glires</taxon>
        <taxon>Lagomorpha</taxon>
        <taxon>Leporidae</taxon>
        <taxon>Oryctolagus</taxon>
    </lineage>
</organism>
<feature type="chain" id="PRO_0000051821" description="Cytochrome P450 4B1">
    <location>
        <begin position="1"/>
        <end position="506"/>
    </location>
</feature>
<feature type="binding site" description="covalent" evidence="2">
    <location>
        <position position="310"/>
    </location>
    <ligand>
        <name>heme</name>
        <dbReference type="ChEBI" id="CHEBI:30413"/>
    </ligand>
</feature>
<feature type="binding site" description="axial binding residue" evidence="2">
    <location>
        <position position="448"/>
    </location>
    <ligand>
        <name>heme</name>
        <dbReference type="ChEBI" id="CHEBI:30413"/>
    </ligand>
    <ligandPart>
        <name>Fe</name>
        <dbReference type="ChEBI" id="CHEBI:18248"/>
    </ligandPart>
</feature>
<feature type="modified residue" description="Phosphoserine" evidence="1">
    <location>
        <position position="431"/>
    </location>
</feature>
<feature type="helix" evidence="4">
    <location>
        <begin position="21"/>
        <end position="38"/>
    </location>
</feature>
<feature type="turn" evidence="4">
    <location>
        <begin position="48"/>
        <end position="50"/>
    </location>
</feature>
<feature type="helix" evidence="4">
    <location>
        <begin position="53"/>
        <end position="56"/>
    </location>
</feature>
<feature type="helix" evidence="4">
    <location>
        <begin position="61"/>
        <end position="71"/>
    </location>
</feature>
<feature type="strand" evidence="4">
    <location>
        <begin position="72"/>
        <end position="83"/>
    </location>
</feature>
<feature type="strand" evidence="4">
    <location>
        <begin position="85"/>
        <end position="89"/>
    </location>
</feature>
<feature type="helix" evidence="4">
    <location>
        <begin position="92"/>
        <end position="99"/>
    </location>
</feature>
<feature type="helix" evidence="4">
    <location>
        <begin position="107"/>
        <end position="110"/>
    </location>
</feature>
<feature type="helix" evidence="4">
    <location>
        <begin position="111"/>
        <end position="113"/>
    </location>
</feature>
<feature type="turn" evidence="4">
    <location>
        <begin position="114"/>
        <end position="116"/>
    </location>
</feature>
<feature type="turn" evidence="4">
    <location>
        <begin position="121"/>
        <end position="123"/>
    </location>
</feature>
<feature type="helix" evidence="4">
    <location>
        <begin position="127"/>
        <end position="136"/>
    </location>
</feature>
<feature type="helix" evidence="4">
    <location>
        <begin position="142"/>
        <end position="145"/>
    </location>
</feature>
<feature type="helix" evidence="4">
    <location>
        <begin position="148"/>
        <end position="167"/>
    </location>
</feature>
<feature type="turn" evidence="4">
    <location>
        <begin position="168"/>
        <end position="170"/>
    </location>
</feature>
<feature type="helix" evidence="4">
    <location>
        <begin position="176"/>
        <end position="191"/>
    </location>
</feature>
<feature type="helix" evidence="4">
    <location>
        <begin position="202"/>
        <end position="222"/>
    </location>
</feature>
<feature type="helix" evidence="4">
    <location>
        <begin position="224"/>
        <end position="226"/>
    </location>
</feature>
<feature type="helix" evidence="4">
    <location>
        <begin position="229"/>
        <end position="232"/>
    </location>
</feature>
<feature type="helix" evidence="4">
    <location>
        <begin position="236"/>
        <end position="262"/>
    </location>
</feature>
<feature type="turn" evidence="4">
    <location>
        <begin position="263"/>
        <end position="265"/>
    </location>
</feature>
<feature type="helix" evidence="4">
    <location>
        <begin position="267"/>
        <end position="270"/>
    </location>
</feature>
<feature type="helix" evidence="4">
    <location>
        <begin position="280"/>
        <end position="285"/>
    </location>
</feature>
<feature type="helix" evidence="4">
    <location>
        <begin position="287"/>
        <end position="289"/>
    </location>
</feature>
<feature type="helix" evidence="4">
    <location>
        <begin position="297"/>
        <end position="328"/>
    </location>
</feature>
<feature type="helix" evidence="4">
    <location>
        <begin position="330"/>
        <end position="344"/>
    </location>
</feature>
<feature type="helix" evidence="4">
    <location>
        <begin position="352"/>
        <end position="355"/>
    </location>
</feature>
<feature type="helix" evidence="4">
    <location>
        <begin position="359"/>
        <end position="371"/>
    </location>
</feature>
<feature type="strand" evidence="4">
    <location>
        <begin position="377"/>
        <end position="381"/>
    </location>
</feature>
<feature type="strand" evidence="4">
    <location>
        <begin position="399"/>
        <end position="403"/>
    </location>
</feature>
<feature type="helix" evidence="4">
    <location>
        <begin position="404"/>
        <end position="407"/>
    </location>
</feature>
<feature type="turn" evidence="4">
    <location>
        <begin position="411"/>
        <end position="413"/>
    </location>
</feature>
<feature type="strand" evidence="4">
    <location>
        <begin position="414"/>
        <end position="416"/>
    </location>
</feature>
<feature type="helix" evidence="4">
    <location>
        <begin position="422"/>
        <end position="425"/>
    </location>
</feature>
<feature type="turn" evidence="4">
    <location>
        <begin position="427"/>
        <end position="432"/>
    </location>
</feature>
<feature type="helix" evidence="4">
    <location>
        <begin position="444"/>
        <end position="446"/>
    </location>
</feature>
<feature type="helix" evidence="4">
    <location>
        <begin position="451"/>
        <end position="468"/>
    </location>
</feature>
<feature type="strand" evidence="4">
    <location>
        <begin position="469"/>
        <end position="472"/>
    </location>
</feature>
<feature type="strand" evidence="4">
    <location>
        <begin position="481"/>
        <end position="489"/>
    </location>
</feature>
<feature type="strand" evidence="4">
    <location>
        <begin position="494"/>
        <end position="499"/>
    </location>
</feature>
<keyword id="KW-0002">3D-structure</keyword>
<keyword id="KW-0903">Direct protein sequencing</keyword>
<keyword id="KW-0256">Endoplasmic reticulum</keyword>
<keyword id="KW-0349">Heme</keyword>
<keyword id="KW-0408">Iron</keyword>
<keyword id="KW-0472">Membrane</keyword>
<keyword id="KW-0479">Metal-binding</keyword>
<keyword id="KW-0492">Microsome</keyword>
<keyword id="KW-0503">Monooxygenase</keyword>
<keyword id="KW-0560">Oxidoreductase</keyword>
<keyword id="KW-0597">Phosphoprotein</keyword>
<keyword id="KW-1185">Reference proteome</keyword>
<name>CP4B1_RABIT</name>
<evidence type="ECO:0000250" key="1">
    <source>
        <dbReference type="UniProtKB" id="P20816"/>
    </source>
</evidence>
<evidence type="ECO:0000250" key="2">
    <source>
        <dbReference type="UniProtKB" id="P51869"/>
    </source>
</evidence>
<evidence type="ECO:0000305" key="3"/>
<evidence type="ECO:0007829" key="4">
    <source>
        <dbReference type="PDB" id="5T6Q"/>
    </source>
</evidence>
<accession>P15128</accession>
<accession>Q9TU22</accession>
<protein>
    <recommendedName>
        <fullName>Cytochrome P450 4B1</fullName>
        <ecNumber>1.14.14.1</ecNumber>
    </recommendedName>
    <alternativeName>
        <fullName>CYPIVB1</fullName>
    </alternativeName>
    <alternativeName>
        <fullName>Cytochrome P450 isozyme 5</fullName>
    </alternativeName>
</protein>